<organism>
    <name type="scientific">Saccharolobus islandicus (strain Y.N.15.51 / Yellowstone #2)</name>
    <name type="common">Sulfolobus islandicus</name>
    <dbReference type="NCBI Taxonomy" id="419942"/>
    <lineage>
        <taxon>Archaea</taxon>
        <taxon>Thermoproteota</taxon>
        <taxon>Thermoprotei</taxon>
        <taxon>Sulfolobales</taxon>
        <taxon>Sulfolobaceae</taxon>
        <taxon>Saccharolobus</taxon>
    </lineage>
</organism>
<feature type="chain" id="PRO_1000216184" description="Transcription factor E">
    <location>
        <begin position="1"/>
        <end position="175"/>
    </location>
</feature>
<feature type="domain" description="HTH TFE/IIEalpha-type" evidence="1">
    <location>
        <begin position="4"/>
        <end position="88"/>
    </location>
</feature>
<accession>C3NFW2</accession>
<keyword id="KW-0238">DNA-binding</keyword>
<keyword id="KW-0804">Transcription</keyword>
<keyword id="KW-0805">Transcription regulation</keyword>
<evidence type="ECO:0000255" key="1">
    <source>
        <dbReference type="HAMAP-Rule" id="MF_01909"/>
    </source>
</evidence>
<gene>
    <name evidence="1" type="primary">tfe</name>
    <name type="ordered locus">YN1551_0972</name>
</gene>
<reference key="1">
    <citation type="journal article" date="2009" name="Proc. Natl. Acad. Sci. U.S.A.">
        <title>Biogeography of the Sulfolobus islandicus pan-genome.</title>
        <authorList>
            <person name="Reno M.L."/>
            <person name="Held N.L."/>
            <person name="Fields C.J."/>
            <person name="Burke P.V."/>
            <person name="Whitaker R.J."/>
        </authorList>
    </citation>
    <scope>NUCLEOTIDE SEQUENCE [LARGE SCALE GENOMIC DNA]</scope>
    <source>
        <strain>Y.N.15.51 / Yellowstone #2</strain>
    </source>
</reference>
<sequence>MVNAEDLFINLAKSLLGDDVIDVLRVLLEKGTEMTDEEIANQLNIKVNDVRKKLNLLEEQGFVSYRKTRDKDSGWFIYYWKPNIDQINEILLNRKRLILDKLKSRLEYEKNNTFFICPQDNSRYSFEEAFENEFKCLKCGSQLTYYDTEKIKSFLEQKIRQIEEEIDKETKLWGK</sequence>
<comment type="function">
    <text evidence="1">Transcription factor that plays a role in the activation of archaeal genes transcribed by RNA polymerase. Facilitates transcription initiation by enhancing TATA-box recognition by TATA-box-binding protein (Tbp), and transcription factor B (Tfb) and RNA polymerase recruitment. Not absolutely required for transcription in vitro, but particularly important in cases where Tbp or Tfb function is not optimal. It dynamically alters the nucleic acid-binding properties of RNA polymerases by stabilizing the initiation complex and destabilizing elongation complexes. Seems to translocate with the RNA polymerase following initiation and acts by binding to the non template strand of the transcription bubble in elongation complexes.</text>
</comment>
<comment type="subunit">
    <text evidence="1">Monomer. Interaction with RNA polymerase subunits RpoF and RpoE is necessary for Tfe stimulatory transcription activity. Able to interact with Tbp and RNA polymerase in the absence of DNA promoter. Interacts both with the preinitiation and elongation complexes.</text>
</comment>
<comment type="domain">
    <text evidence="1">The winged helix domain is involved in binding to DNA in the preinitiation complex.</text>
</comment>
<comment type="similarity">
    <text evidence="1">Belongs to the TFE family.</text>
</comment>
<proteinExistence type="inferred from homology"/>
<name>TFE_SACI1</name>
<dbReference type="EMBL" id="CP001404">
    <property type="protein sequence ID" value="ACP48080.1"/>
    <property type="molecule type" value="Genomic_DNA"/>
</dbReference>
<dbReference type="SMR" id="C3NFW2"/>
<dbReference type="KEGG" id="sin:YN1551_0972"/>
<dbReference type="HOGENOM" id="CLU_100097_0_0_2"/>
<dbReference type="Proteomes" id="UP000006818">
    <property type="component" value="Chromosome"/>
</dbReference>
<dbReference type="GO" id="GO:0003677">
    <property type="term" value="F:DNA binding"/>
    <property type="evidence" value="ECO:0007669"/>
    <property type="project" value="UniProtKB-KW"/>
</dbReference>
<dbReference type="GO" id="GO:0006355">
    <property type="term" value="P:regulation of DNA-templated transcription"/>
    <property type="evidence" value="ECO:0007669"/>
    <property type="project" value="InterPro"/>
</dbReference>
<dbReference type="GO" id="GO:0006367">
    <property type="term" value="P:transcription initiation at RNA polymerase II promoter"/>
    <property type="evidence" value="ECO:0007669"/>
    <property type="project" value="InterPro"/>
</dbReference>
<dbReference type="Gene3D" id="1.10.10.10">
    <property type="entry name" value="Winged helix-like DNA-binding domain superfamily/Winged helix DNA-binding domain"/>
    <property type="match status" value="1"/>
</dbReference>
<dbReference type="HAMAP" id="MF_01909">
    <property type="entry name" value="TFE_arch"/>
    <property type="match status" value="1"/>
</dbReference>
<dbReference type="InterPro" id="IPR016481">
    <property type="entry name" value="TF_E_archaea"/>
</dbReference>
<dbReference type="InterPro" id="IPR039997">
    <property type="entry name" value="TFE"/>
</dbReference>
<dbReference type="InterPro" id="IPR017919">
    <property type="entry name" value="TFIIE/TFIIEa_HTH"/>
</dbReference>
<dbReference type="InterPro" id="IPR002853">
    <property type="entry name" value="TFIIE_asu"/>
</dbReference>
<dbReference type="InterPro" id="IPR024550">
    <property type="entry name" value="TFIIEa/SarR/Rpc3_HTH_dom"/>
</dbReference>
<dbReference type="InterPro" id="IPR036388">
    <property type="entry name" value="WH-like_DNA-bd_sf"/>
</dbReference>
<dbReference type="InterPro" id="IPR036390">
    <property type="entry name" value="WH_DNA-bd_sf"/>
</dbReference>
<dbReference type="PANTHER" id="PTHR13097:SF7">
    <property type="entry name" value="GENERAL TRANSCRIPTION FACTOR IIE SUBUNIT 1"/>
    <property type="match status" value="1"/>
</dbReference>
<dbReference type="PANTHER" id="PTHR13097">
    <property type="entry name" value="TRANSCRIPTION INITIATION FACTOR IIE, ALPHA SUBUNIT"/>
    <property type="match status" value="1"/>
</dbReference>
<dbReference type="Pfam" id="PF02002">
    <property type="entry name" value="TFIIE_alpha"/>
    <property type="match status" value="1"/>
</dbReference>
<dbReference type="PIRSF" id="PIRSF006373">
    <property type="entry name" value="TF_E_archaea"/>
    <property type="match status" value="1"/>
</dbReference>
<dbReference type="SMART" id="SM00531">
    <property type="entry name" value="TFIIE"/>
    <property type="match status" value="1"/>
</dbReference>
<dbReference type="SUPFAM" id="SSF46785">
    <property type="entry name" value="Winged helix' DNA-binding domain"/>
    <property type="match status" value="1"/>
</dbReference>
<dbReference type="PROSITE" id="PS51344">
    <property type="entry name" value="HTH_TFE_IIE"/>
    <property type="match status" value="1"/>
</dbReference>
<protein>
    <recommendedName>
        <fullName evidence="1">Transcription factor E</fullName>
        <shortName evidence="1">TFE</shortName>
    </recommendedName>
    <alternativeName>
        <fullName evidence="1">TFIIE subunit alpha homolog</fullName>
    </alternativeName>
    <alternativeName>
        <fullName evidence="1">Transcription initiation factor TFIIE</fullName>
    </alternativeName>
</protein>